<gene>
    <name type="primary">has1</name>
    <name type="ORF">An01g09040</name>
</gene>
<comment type="function">
    <text>ATP-dependent RNA helicase involved in 40S ribosomal subunit biogenesis. Required for the processing and cleavage of 35S pre-rRNA at sites A0, A1, and A2, leading to mature 18S rRNA.</text>
</comment>
<comment type="catalytic activity">
    <reaction>
        <text>ATP + H2O = ADP + phosphate + H(+)</text>
        <dbReference type="Rhea" id="RHEA:13065"/>
        <dbReference type="ChEBI" id="CHEBI:15377"/>
        <dbReference type="ChEBI" id="CHEBI:15378"/>
        <dbReference type="ChEBI" id="CHEBI:30616"/>
        <dbReference type="ChEBI" id="CHEBI:43474"/>
        <dbReference type="ChEBI" id="CHEBI:456216"/>
        <dbReference type="EC" id="3.6.4.13"/>
    </reaction>
</comment>
<comment type="subunit">
    <text evidence="1">Associates in the nucleolus with the 60S and pre-60S ribosomal subunits.</text>
</comment>
<comment type="subcellular location">
    <subcellularLocation>
        <location evidence="1">Nucleus</location>
        <location evidence="1">Nucleolus</location>
    </subcellularLocation>
</comment>
<comment type="domain">
    <text>The Q motif is unique to and characteristic of the DEAD box family of RNA helicases and controls ATP binding and hydrolysis.</text>
</comment>
<comment type="similarity">
    <text evidence="5">Belongs to the DEAD box helicase family. DDX18/HAS1 subfamily.</text>
</comment>
<sequence length="606" mass="68042">MPIPVDTAKSINKKRKRKHGARAATDADDASPKPAVENGETTEVTETPTEKKSKKKAAKESEKEEKPKKRKVDDSSNEDENDSEEEVREADPEDEDDNEGKEDGNGADLPSLDAVRLPQTDGEPKKFTELNLSEKTMKGIQDMGFETMTEIQQRTIPPLLAGRDVLGAAKTGSGKTLSFLIPAVEMLSALRFKPRNGTGVLVVSPTRELALQIFGVARELMAHHSQTYGIVIGGANRRAEAEKLTKGVNLLIATPGRLLDHLQNTPGFVFKNLKTLVIDEADRILEVGFEDEMRQIVKILPSEERQTMLFSATQTTKVEDLARISLRPGPLYINVDHRKEHSTVEGLEQGYVICEADKRFLLLFSFLKRNLKKKIIVFFSSCNCVKYHAELLNYIDLPVLELHGKQKQQKRTNTFFEFCNAKQGTLICTDVAARGLDIPAVDWIIQFDPPDDTRDYVHRVGRTARGVNGKGRSLMFLQPSEVGFLKHLKEARVPVVEFDFPANKIVNVQSQLEKLIGQNYYLNKSAKEGYRAYLQAYASHSLRSVFDVHKLDLVKIAKGFGFSTPPRIDIQLGSSLSRDKKQQQQGRRNYGSQPKGLKFKRKHEDD</sequence>
<name>HAS1_ASPNC</name>
<dbReference type="EC" id="3.6.4.13"/>
<dbReference type="EMBL" id="AM269978">
    <property type="protein sequence ID" value="CAK43955.1"/>
    <property type="molecule type" value="Genomic_DNA"/>
</dbReference>
<dbReference type="RefSeq" id="XP_001389325.1">
    <property type="nucleotide sequence ID" value="XM_001389288.2"/>
</dbReference>
<dbReference type="SMR" id="A2Q9T6"/>
<dbReference type="EnsemblFungi" id="CAK43955">
    <property type="protein sequence ID" value="CAK43955"/>
    <property type="gene ID" value="An01g09040"/>
</dbReference>
<dbReference type="GeneID" id="4977425"/>
<dbReference type="KEGG" id="ang:An01g09040"/>
<dbReference type="VEuPathDB" id="FungiDB:An01g09040"/>
<dbReference type="HOGENOM" id="CLU_003041_26_5_1"/>
<dbReference type="Proteomes" id="UP000006706">
    <property type="component" value="Chromosome 2R"/>
</dbReference>
<dbReference type="GO" id="GO:0005635">
    <property type="term" value="C:nuclear envelope"/>
    <property type="evidence" value="ECO:0007669"/>
    <property type="project" value="EnsemblFungi"/>
</dbReference>
<dbReference type="GO" id="GO:0005730">
    <property type="term" value="C:nucleolus"/>
    <property type="evidence" value="ECO:0007669"/>
    <property type="project" value="UniProtKB-SubCell"/>
</dbReference>
<dbReference type="GO" id="GO:0030687">
    <property type="term" value="C:preribosome, large subunit precursor"/>
    <property type="evidence" value="ECO:0007669"/>
    <property type="project" value="EnsemblFungi"/>
</dbReference>
<dbReference type="GO" id="GO:0032040">
    <property type="term" value="C:small-subunit processome"/>
    <property type="evidence" value="ECO:0007669"/>
    <property type="project" value="EnsemblFungi"/>
</dbReference>
<dbReference type="GO" id="GO:0005524">
    <property type="term" value="F:ATP binding"/>
    <property type="evidence" value="ECO:0007669"/>
    <property type="project" value="UniProtKB-KW"/>
</dbReference>
<dbReference type="GO" id="GO:0016887">
    <property type="term" value="F:ATP hydrolysis activity"/>
    <property type="evidence" value="ECO:0007669"/>
    <property type="project" value="RHEA"/>
</dbReference>
<dbReference type="GO" id="GO:0042802">
    <property type="term" value="F:identical protein binding"/>
    <property type="evidence" value="ECO:0007669"/>
    <property type="project" value="EnsemblFungi"/>
</dbReference>
<dbReference type="GO" id="GO:0003723">
    <property type="term" value="F:RNA binding"/>
    <property type="evidence" value="ECO:0007669"/>
    <property type="project" value="UniProtKB-KW"/>
</dbReference>
<dbReference type="GO" id="GO:0003724">
    <property type="term" value="F:RNA helicase activity"/>
    <property type="evidence" value="ECO:0007669"/>
    <property type="project" value="UniProtKB-EC"/>
</dbReference>
<dbReference type="GO" id="GO:0000463">
    <property type="term" value="P:maturation of LSU-rRNA from tricistronic rRNA transcript (SSU-rRNA, 5.8S rRNA, LSU-rRNA)"/>
    <property type="evidence" value="ECO:0007669"/>
    <property type="project" value="EnsemblFungi"/>
</dbReference>
<dbReference type="GO" id="GO:0000462">
    <property type="term" value="P:maturation of SSU-rRNA from tricistronic rRNA transcript (SSU-rRNA, 5.8S rRNA, LSU-rRNA)"/>
    <property type="evidence" value="ECO:0007669"/>
    <property type="project" value="EnsemblFungi"/>
</dbReference>
<dbReference type="GO" id="GO:1990417">
    <property type="term" value="P:snoRNA release from pre-rRNA"/>
    <property type="evidence" value="ECO:0007669"/>
    <property type="project" value="EnsemblFungi"/>
</dbReference>
<dbReference type="CDD" id="cd17942">
    <property type="entry name" value="DEADc_DDX18"/>
    <property type="match status" value="1"/>
</dbReference>
<dbReference type="CDD" id="cd18787">
    <property type="entry name" value="SF2_C_DEAD"/>
    <property type="match status" value="1"/>
</dbReference>
<dbReference type="FunFam" id="3.40.50.300:FF:000379">
    <property type="entry name" value="RNA helicase"/>
    <property type="match status" value="1"/>
</dbReference>
<dbReference type="FunFam" id="3.40.50.300:FF:000460">
    <property type="entry name" value="RNA helicase"/>
    <property type="match status" value="1"/>
</dbReference>
<dbReference type="Gene3D" id="3.40.50.300">
    <property type="entry name" value="P-loop containing nucleotide triphosphate hydrolases"/>
    <property type="match status" value="2"/>
</dbReference>
<dbReference type="InterPro" id="IPR044773">
    <property type="entry name" value="DDX18/Has1_DEADc"/>
</dbReference>
<dbReference type="InterPro" id="IPR011545">
    <property type="entry name" value="DEAD/DEAH_box_helicase_dom"/>
</dbReference>
<dbReference type="InterPro" id="IPR014001">
    <property type="entry name" value="Helicase_ATP-bd"/>
</dbReference>
<dbReference type="InterPro" id="IPR001650">
    <property type="entry name" value="Helicase_C-like"/>
</dbReference>
<dbReference type="InterPro" id="IPR027417">
    <property type="entry name" value="P-loop_NTPase"/>
</dbReference>
<dbReference type="InterPro" id="IPR000629">
    <property type="entry name" value="RNA-helicase_DEAD-box_CS"/>
</dbReference>
<dbReference type="InterPro" id="IPR014014">
    <property type="entry name" value="RNA_helicase_DEAD_Q_motif"/>
</dbReference>
<dbReference type="InterPro" id="IPR025313">
    <property type="entry name" value="SPB4-like_CTE"/>
</dbReference>
<dbReference type="PANTHER" id="PTHR24031">
    <property type="entry name" value="RNA HELICASE"/>
    <property type="match status" value="1"/>
</dbReference>
<dbReference type="Pfam" id="PF13959">
    <property type="entry name" value="CTE_SPB4"/>
    <property type="match status" value="1"/>
</dbReference>
<dbReference type="Pfam" id="PF00270">
    <property type="entry name" value="DEAD"/>
    <property type="match status" value="1"/>
</dbReference>
<dbReference type="Pfam" id="PF00271">
    <property type="entry name" value="Helicase_C"/>
    <property type="match status" value="1"/>
</dbReference>
<dbReference type="SMART" id="SM00487">
    <property type="entry name" value="DEXDc"/>
    <property type="match status" value="1"/>
</dbReference>
<dbReference type="SMART" id="SM01178">
    <property type="entry name" value="DUF4217"/>
    <property type="match status" value="1"/>
</dbReference>
<dbReference type="SMART" id="SM00490">
    <property type="entry name" value="HELICc"/>
    <property type="match status" value="1"/>
</dbReference>
<dbReference type="SUPFAM" id="SSF52540">
    <property type="entry name" value="P-loop containing nucleoside triphosphate hydrolases"/>
    <property type="match status" value="2"/>
</dbReference>
<dbReference type="PROSITE" id="PS00039">
    <property type="entry name" value="DEAD_ATP_HELICASE"/>
    <property type="match status" value="1"/>
</dbReference>
<dbReference type="PROSITE" id="PS51192">
    <property type="entry name" value="HELICASE_ATP_BIND_1"/>
    <property type="match status" value="1"/>
</dbReference>
<dbReference type="PROSITE" id="PS51194">
    <property type="entry name" value="HELICASE_CTER"/>
    <property type="match status" value="1"/>
</dbReference>
<dbReference type="PROSITE" id="PS51195">
    <property type="entry name" value="Q_MOTIF"/>
    <property type="match status" value="1"/>
</dbReference>
<proteinExistence type="inferred from homology"/>
<feature type="chain" id="PRO_0000282469" description="ATP-dependent RNA helicase has1">
    <location>
        <begin position="1"/>
        <end position="606"/>
    </location>
</feature>
<feature type="domain" description="Helicase ATP-binding" evidence="2">
    <location>
        <begin position="156"/>
        <end position="332"/>
    </location>
</feature>
<feature type="domain" description="Helicase C-terminal" evidence="3">
    <location>
        <begin position="346"/>
        <end position="516"/>
    </location>
</feature>
<feature type="region of interest" description="Disordered" evidence="4">
    <location>
        <begin position="1"/>
        <end position="125"/>
    </location>
</feature>
<feature type="region of interest" description="Disordered" evidence="4">
    <location>
        <begin position="574"/>
        <end position="606"/>
    </location>
</feature>
<feature type="short sequence motif" description="Q motif">
    <location>
        <begin position="125"/>
        <end position="153"/>
    </location>
</feature>
<feature type="short sequence motif" description="DEAD box">
    <location>
        <begin position="279"/>
        <end position="282"/>
    </location>
</feature>
<feature type="compositionally biased region" description="Basic residues" evidence="4">
    <location>
        <begin position="11"/>
        <end position="21"/>
    </location>
</feature>
<feature type="compositionally biased region" description="Basic and acidic residues" evidence="4">
    <location>
        <begin position="58"/>
        <end position="74"/>
    </location>
</feature>
<feature type="compositionally biased region" description="Acidic residues" evidence="4">
    <location>
        <begin position="75"/>
        <end position="100"/>
    </location>
</feature>
<feature type="compositionally biased region" description="Polar residues" evidence="4">
    <location>
        <begin position="583"/>
        <end position="592"/>
    </location>
</feature>
<feature type="compositionally biased region" description="Basic residues" evidence="4">
    <location>
        <begin position="597"/>
        <end position="606"/>
    </location>
</feature>
<feature type="binding site" evidence="2">
    <location>
        <begin position="169"/>
        <end position="176"/>
    </location>
    <ligand>
        <name>ATP</name>
        <dbReference type="ChEBI" id="CHEBI:30616"/>
    </ligand>
</feature>
<organism>
    <name type="scientific">Aspergillus niger (strain ATCC MYA-4892 / CBS 513.88 / FGSC A1513)</name>
    <dbReference type="NCBI Taxonomy" id="425011"/>
    <lineage>
        <taxon>Eukaryota</taxon>
        <taxon>Fungi</taxon>
        <taxon>Dikarya</taxon>
        <taxon>Ascomycota</taxon>
        <taxon>Pezizomycotina</taxon>
        <taxon>Eurotiomycetes</taxon>
        <taxon>Eurotiomycetidae</taxon>
        <taxon>Eurotiales</taxon>
        <taxon>Aspergillaceae</taxon>
        <taxon>Aspergillus</taxon>
        <taxon>Aspergillus subgen. Circumdati</taxon>
    </lineage>
</organism>
<keyword id="KW-0067">ATP-binding</keyword>
<keyword id="KW-0347">Helicase</keyword>
<keyword id="KW-0378">Hydrolase</keyword>
<keyword id="KW-0547">Nucleotide-binding</keyword>
<keyword id="KW-0539">Nucleus</keyword>
<keyword id="KW-1185">Reference proteome</keyword>
<keyword id="KW-0690">Ribosome biogenesis</keyword>
<keyword id="KW-0694">RNA-binding</keyword>
<keyword id="KW-0698">rRNA processing</keyword>
<evidence type="ECO:0000250" key="1"/>
<evidence type="ECO:0000255" key="2">
    <source>
        <dbReference type="PROSITE-ProRule" id="PRU00541"/>
    </source>
</evidence>
<evidence type="ECO:0000255" key="3">
    <source>
        <dbReference type="PROSITE-ProRule" id="PRU00542"/>
    </source>
</evidence>
<evidence type="ECO:0000256" key="4">
    <source>
        <dbReference type="SAM" id="MobiDB-lite"/>
    </source>
</evidence>
<evidence type="ECO:0000305" key="5"/>
<accession>A2Q9T6</accession>
<reference key="1">
    <citation type="journal article" date="2007" name="Nat. Biotechnol.">
        <title>Genome sequencing and analysis of the versatile cell factory Aspergillus niger CBS 513.88.</title>
        <authorList>
            <person name="Pel H.J."/>
            <person name="de Winde J.H."/>
            <person name="Archer D.B."/>
            <person name="Dyer P.S."/>
            <person name="Hofmann G."/>
            <person name="Schaap P.J."/>
            <person name="Turner G."/>
            <person name="de Vries R.P."/>
            <person name="Albang R."/>
            <person name="Albermann K."/>
            <person name="Andersen M.R."/>
            <person name="Bendtsen J.D."/>
            <person name="Benen J.A.E."/>
            <person name="van den Berg M."/>
            <person name="Breestraat S."/>
            <person name="Caddick M.X."/>
            <person name="Contreras R."/>
            <person name="Cornell M."/>
            <person name="Coutinho P.M."/>
            <person name="Danchin E.G.J."/>
            <person name="Debets A.J.M."/>
            <person name="Dekker P."/>
            <person name="van Dijck P.W.M."/>
            <person name="van Dijk A."/>
            <person name="Dijkhuizen L."/>
            <person name="Driessen A.J.M."/>
            <person name="d'Enfert C."/>
            <person name="Geysens S."/>
            <person name="Goosen C."/>
            <person name="Groot G.S.P."/>
            <person name="de Groot P.W.J."/>
            <person name="Guillemette T."/>
            <person name="Henrissat B."/>
            <person name="Herweijer M."/>
            <person name="van den Hombergh J.P.T.W."/>
            <person name="van den Hondel C.A.M.J.J."/>
            <person name="van der Heijden R.T.J.M."/>
            <person name="van der Kaaij R.M."/>
            <person name="Klis F.M."/>
            <person name="Kools H.J."/>
            <person name="Kubicek C.P."/>
            <person name="van Kuyk P.A."/>
            <person name="Lauber J."/>
            <person name="Lu X."/>
            <person name="van der Maarel M.J.E.C."/>
            <person name="Meulenberg R."/>
            <person name="Menke H."/>
            <person name="Mortimer M.A."/>
            <person name="Nielsen J."/>
            <person name="Oliver S.G."/>
            <person name="Olsthoorn M."/>
            <person name="Pal K."/>
            <person name="van Peij N.N.M.E."/>
            <person name="Ram A.F.J."/>
            <person name="Rinas U."/>
            <person name="Roubos J.A."/>
            <person name="Sagt C.M.J."/>
            <person name="Schmoll M."/>
            <person name="Sun J."/>
            <person name="Ussery D."/>
            <person name="Varga J."/>
            <person name="Vervecken W."/>
            <person name="van de Vondervoort P.J.J."/>
            <person name="Wedler H."/>
            <person name="Woesten H.A.B."/>
            <person name="Zeng A.-P."/>
            <person name="van Ooyen A.J.J."/>
            <person name="Visser J."/>
            <person name="Stam H."/>
        </authorList>
    </citation>
    <scope>NUCLEOTIDE SEQUENCE [LARGE SCALE GENOMIC DNA]</scope>
    <source>
        <strain>ATCC MYA-4892 / CBS 513.88 / FGSC A1513</strain>
    </source>
</reference>
<protein>
    <recommendedName>
        <fullName>ATP-dependent RNA helicase has1</fullName>
        <ecNumber>3.6.4.13</ecNumber>
    </recommendedName>
</protein>